<sequence length="652" mass="71675">MRLAASIAVALPVIGAASAQGFPPPVTGVTVVKSKYDENVKITYKENDICETTEGVRSFTGHVHLPPDNDYFGVYQNYSINTFFWFFEAREDPKNAPLSIWLNGGPGSSSMIGLFQENGPCWINDDSKSTTNNSFSWNNRVNMLYIDQPNQVGFSYDELTNITYSTINDTISVADFSSGVPAQNLSTLVGTGSSQKPWATANNTVNAARSIWHFAQVWFQEFPEHKPNNNKISIWTESYGGRYGPSFASYFQEQNEKIKNHTITKEGEMHILNLDTLGVINGCIDLMFQAESYAEFPYNNTYGITAYTKEKRDAIIRDIHRPDGCFDKLAKCREAAKEGDPHFYSNNATVNAICAEANSDCDKYLMEPFQEANLGYYDIAHPLQDPFPPPFFKGFLSQSSVLSDMGSPVNFSHYSQAVGKSFHGVGDYARPDVRGFTGDIAYLLESGVKVALVYGDRDYICNWLGGEQVSLGLNYTGTEAFRKAGYADVKVNSSYVGGLVRQHGNFSFTRVFEAGHEVPGYQPETSLKIFERIMFNKDIATGELDIAQKQDYGTTGTESTFQVKNEIPPSPEPTCYLLSADGTCTPEQLNAIENGTAVVENYIIKSPAASKGNPPPTTTSSPTASPTAGSAMLKAPVAMLAISALTVLAFYL</sequence>
<proteinExistence type="inferred from homology"/>
<dbReference type="EC" id="3.4.16.6"/>
<dbReference type="EMBL" id="ACYE01000255">
    <property type="protein sequence ID" value="EFE40253.1"/>
    <property type="molecule type" value="Genomic_DNA"/>
</dbReference>
<dbReference type="RefSeq" id="XP_003020871.1">
    <property type="nucleotide sequence ID" value="XM_003020825.1"/>
</dbReference>
<dbReference type="SMR" id="D4DD24"/>
<dbReference type="ESTHER" id="triru-SPCA">
    <property type="family name" value="Carboxypeptidase_S10"/>
</dbReference>
<dbReference type="MEROPS" id="S10.016"/>
<dbReference type="GlyCosmos" id="D4DD24">
    <property type="glycosylation" value="14 sites, No reported glycans"/>
</dbReference>
<dbReference type="GeneID" id="9577701"/>
<dbReference type="KEGG" id="tve:TRV_05031"/>
<dbReference type="HOGENOM" id="CLU_008523_10_3_1"/>
<dbReference type="OrthoDB" id="1709at34384"/>
<dbReference type="Proteomes" id="UP000008383">
    <property type="component" value="Unassembled WGS sequence"/>
</dbReference>
<dbReference type="GO" id="GO:0000324">
    <property type="term" value="C:fungal-type vacuole"/>
    <property type="evidence" value="ECO:0007669"/>
    <property type="project" value="TreeGrafter"/>
</dbReference>
<dbReference type="GO" id="GO:0005886">
    <property type="term" value="C:plasma membrane"/>
    <property type="evidence" value="ECO:0007669"/>
    <property type="project" value="UniProtKB-SubCell"/>
</dbReference>
<dbReference type="GO" id="GO:0098552">
    <property type="term" value="C:side of membrane"/>
    <property type="evidence" value="ECO:0007669"/>
    <property type="project" value="UniProtKB-KW"/>
</dbReference>
<dbReference type="GO" id="GO:0004185">
    <property type="term" value="F:serine-type carboxypeptidase activity"/>
    <property type="evidence" value="ECO:0007669"/>
    <property type="project" value="UniProtKB-EC"/>
</dbReference>
<dbReference type="GO" id="GO:0006508">
    <property type="term" value="P:proteolysis"/>
    <property type="evidence" value="ECO:0007669"/>
    <property type="project" value="UniProtKB-KW"/>
</dbReference>
<dbReference type="Gene3D" id="3.40.50.1820">
    <property type="entry name" value="alpha/beta hydrolase"/>
    <property type="match status" value="1"/>
</dbReference>
<dbReference type="InterPro" id="IPR029058">
    <property type="entry name" value="AB_hydrolase_fold"/>
</dbReference>
<dbReference type="InterPro" id="IPR001563">
    <property type="entry name" value="Peptidase_S10"/>
</dbReference>
<dbReference type="InterPro" id="IPR018202">
    <property type="entry name" value="Ser_caboxypep_ser_AS"/>
</dbReference>
<dbReference type="PANTHER" id="PTHR11802:SF189">
    <property type="entry name" value="CARBOXYPEPTIDASE"/>
    <property type="match status" value="1"/>
</dbReference>
<dbReference type="PANTHER" id="PTHR11802">
    <property type="entry name" value="SERINE PROTEASE FAMILY S10 SERINE CARBOXYPEPTIDASE"/>
    <property type="match status" value="1"/>
</dbReference>
<dbReference type="Pfam" id="PF00450">
    <property type="entry name" value="Peptidase_S10"/>
    <property type="match status" value="1"/>
</dbReference>
<dbReference type="PRINTS" id="PR00724">
    <property type="entry name" value="CRBOXYPTASEC"/>
</dbReference>
<dbReference type="SUPFAM" id="SSF53474">
    <property type="entry name" value="alpha/beta-Hydrolases"/>
    <property type="match status" value="1"/>
</dbReference>
<dbReference type="PROSITE" id="PS00131">
    <property type="entry name" value="CARBOXYPEPT_SER_SER"/>
    <property type="match status" value="1"/>
</dbReference>
<comment type="function">
    <text evidence="1">Extracellular serine carboxypeptidase that contributes to pathogenicity.</text>
</comment>
<comment type="catalytic activity">
    <reaction>
        <text>Preferential release of a C-terminal arginine or lysine residue.</text>
        <dbReference type="EC" id="3.4.16.6"/>
    </reaction>
</comment>
<comment type="subcellular location">
    <subcellularLocation>
        <location evidence="5">Cell membrane</location>
        <topology evidence="5">Lipid-anchor</topology>
        <topology evidence="5">GPI-anchor</topology>
    </subcellularLocation>
</comment>
<comment type="similarity">
    <text evidence="5">Belongs to the peptidase S10 family.</text>
</comment>
<evidence type="ECO:0000250" key="1"/>
<evidence type="ECO:0000255" key="2"/>
<evidence type="ECO:0000255" key="3">
    <source>
        <dbReference type="PROSITE-ProRule" id="PRU10074"/>
    </source>
</evidence>
<evidence type="ECO:0000256" key="4">
    <source>
        <dbReference type="SAM" id="MobiDB-lite"/>
    </source>
</evidence>
<evidence type="ECO:0000305" key="5"/>
<organism>
    <name type="scientific">Trichophyton verrucosum (strain HKI 0517)</name>
    <dbReference type="NCBI Taxonomy" id="663202"/>
    <lineage>
        <taxon>Eukaryota</taxon>
        <taxon>Fungi</taxon>
        <taxon>Dikarya</taxon>
        <taxon>Ascomycota</taxon>
        <taxon>Pezizomycotina</taxon>
        <taxon>Eurotiomycetes</taxon>
        <taxon>Eurotiomycetidae</taxon>
        <taxon>Onygenales</taxon>
        <taxon>Arthrodermataceae</taxon>
        <taxon>Trichophyton</taxon>
    </lineage>
</organism>
<reference key="1">
    <citation type="journal article" date="2011" name="Genome Biol.">
        <title>Comparative and functional genomics provide insights into the pathogenicity of dermatophytic fungi.</title>
        <authorList>
            <person name="Burmester A."/>
            <person name="Shelest E."/>
            <person name="Gloeckner G."/>
            <person name="Heddergott C."/>
            <person name="Schindler S."/>
            <person name="Staib P."/>
            <person name="Heidel A."/>
            <person name="Felder M."/>
            <person name="Petzold A."/>
            <person name="Szafranski K."/>
            <person name="Feuermann M."/>
            <person name="Pedruzzi I."/>
            <person name="Priebe S."/>
            <person name="Groth M."/>
            <person name="Winkler R."/>
            <person name="Li W."/>
            <person name="Kniemeyer O."/>
            <person name="Schroeckh V."/>
            <person name="Hertweck C."/>
            <person name="Hube B."/>
            <person name="White T.C."/>
            <person name="Platzer M."/>
            <person name="Guthke R."/>
            <person name="Heitman J."/>
            <person name="Woestemeyer J."/>
            <person name="Zipfel P.F."/>
            <person name="Monod M."/>
            <person name="Brakhage A.A."/>
        </authorList>
    </citation>
    <scope>NUCLEOTIDE SEQUENCE [LARGE SCALE GENOMIC DNA]</scope>
    <source>
        <strain>HKI 0517</strain>
    </source>
</reference>
<name>SCPA_TRIVH</name>
<feature type="signal peptide" evidence="2">
    <location>
        <begin position="1"/>
        <end position="19"/>
    </location>
</feature>
<feature type="chain" id="PRO_0000397825" description="Carboxypeptidase S1 homolog A">
    <location>
        <begin position="20"/>
        <end position="629"/>
    </location>
</feature>
<feature type="propeptide" id="PRO_0000397826" description="Removed in mature form" evidence="2">
    <location>
        <begin position="630"/>
        <end position="652"/>
    </location>
</feature>
<feature type="region of interest" description="Disordered" evidence="4">
    <location>
        <begin position="608"/>
        <end position="628"/>
    </location>
</feature>
<feature type="compositionally biased region" description="Low complexity" evidence="4">
    <location>
        <begin position="618"/>
        <end position="628"/>
    </location>
</feature>
<feature type="active site" evidence="3">
    <location>
        <position position="238"/>
    </location>
</feature>
<feature type="active site" evidence="3">
    <location>
        <position position="458"/>
    </location>
</feature>
<feature type="active site" evidence="3">
    <location>
        <position position="516"/>
    </location>
</feature>
<feature type="binding site" evidence="1">
    <location>
        <position position="461"/>
    </location>
    <ligand>
        <name>substrate</name>
    </ligand>
</feature>
<feature type="binding site" evidence="1">
    <location>
        <position position="517"/>
    </location>
    <ligand>
        <name>substrate</name>
    </ligand>
</feature>
<feature type="lipid moiety-binding region" description="GPI-anchor amidated glycine" evidence="2">
    <location>
        <position position="629"/>
    </location>
</feature>
<feature type="glycosylation site" description="N-linked (GlcNAc...) asparagine" evidence="2">
    <location>
        <position position="77"/>
    </location>
</feature>
<feature type="glycosylation site" description="N-linked (GlcNAc...) asparagine" evidence="2">
    <location>
        <position position="132"/>
    </location>
</feature>
<feature type="glycosylation site" description="N-linked (GlcNAc...) asparagine" evidence="2">
    <location>
        <position position="161"/>
    </location>
</feature>
<feature type="glycosylation site" description="N-linked (GlcNAc...) asparagine" evidence="2">
    <location>
        <position position="168"/>
    </location>
</feature>
<feature type="glycosylation site" description="N-linked (GlcNAc...) asparagine" evidence="2">
    <location>
        <position position="184"/>
    </location>
</feature>
<feature type="glycosylation site" description="N-linked (GlcNAc...) asparagine" evidence="2">
    <location>
        <position position="202"/>
    </location>
</feature>
<feature type="glycosylation site" description="N-linked (GlcNAc...) asparagine" evidence="2">
    <location>
        <position position="260"/>
    </location>
</feature>
<feature type="glycosylation site" description="N-linked (GlcNAc...) asparagine" evidence="2">
    <location>
        <position position="299"/>
    </location>
</feature>
<feature type="glycosylation site" description="N-linked (GlcNAc...) asparagine" evidence="2">
    <location>
        <position position="347"/>
    </location>
</feature>
<feature type="glycosylation site" description="N-linked (GlcNAc...) asparagine" evidence="2">
    <location>
        <position position="410"/>
    </location>
</feature>
<feature type="glycosylation site" description="N-linked (GlcNAc...) asparagine" evidence="2">
    <location>
        <position position="474"/>
    </location>
</feature>
<feature type="glycosylation site" description="N-linked (GlcNAc...) asparagine" evidence="2">
    <location>
        <position position="492"/>
    </location>
</feature>
<feature type="glycosylation site" description="N-linked (GlcNAc...) asparagine" evidence="2">
    <location>
        <position position="505"/>
    </location>
</feature>
<feature type="glycosylation site" description="N-linked (GlcNAc...) asparagine" evidence="2">
    <location>
        <position position="594"/>
    </location>
</feature>
<feature type="disulfide bond" evidence="1">
    <location>
        <begin position="50"/>
        <end position="121"/>
    </location>
</feature>
<feature type="disulfide bond" evidence="1">
    <location>
        <begin position="325"/>
        <end position="361"/>
    </location>
</feature>
<feature type="disulfide bond" evidence="1">
    <location>
        <begin position="332"/>
        <end position="354"/>
    </location>
</feature>
<accession>D4DD24</accession>
<protein>
    <recommendedName>
        <fullName>Carboxypeptidase S1 homolog A</fullName>
        <ecNumber>3.4.16.6</ecNumber>
    </recommendedName>
    <alternativeName>
        <fullName>Serine carboxypeptidase A</fullName>
        <shortName>SCPA</shortName>
    </alternativeName>
</protein>
<keyword id="KW-0121">Carboxypeptidase</keyword>
<keyword id="KW-1003">Cell membrane</keyword>
<keyword id="KW-1015">Disulfide bond</keyword>
<keyword id="KW-0325">Glycoprotein</keyword>
<keyword id="KW-0336">GPI-anchor</keyword>
<keyword id="KW-0378">Hydrolase</keyword>
<keyword id="KW-0449">Lipoprotein</keyword>
<keyword id="KW-0472">Membrane</keyword>
<keyword id="KW-0645">Protease</keyword>
<keyword id="KW-0732">Signal</keyword>
<keyword id="KW-0843">Virulence</keyword>
<gene>
    <name type="primary">SCPA</name>
    <name type="ORF">TRV_05031</name>
</gene>